<organism>
    <name type="scientific">Pongo abelii</name>
    <name type="common">Sumatran orangutan</name>
    <name type="synonym">Pongo pygmaeus abelii</name>
    <dbReference type="NCBI Taxonomy" id="9601"/>
    <lineage>
        <taxon>Eukaryota</taxon>
        <taxon>Metazoa</taxon>
        <taxon>Chordata</taxon>
        <taxon>Craniata</taxon>
        <taxon>Vertebrata</taxon>
        <taxon>Euteleostomi</taxon>
        <taxon>Mammalia</taxon>
        <taxon>Eutheria</taxon>
        <taxon>Euarchontoglires</taxon>
        <taxon>Primates</taxon>
        <taxon>Haplorrhini</taxon>
        <taxon>Catarrhini</taxon>
        <taxon>Hominidae</taxon>
        <taxon>Pongo</taxon>
    </lineage>
</organism>
<protein>
    <recommendedName>
        <fullName>Prothrombin</fullName>
        <ecNumber>3.4.21.5</ecNumber>
    </recommendedName>
    <alternativeName>
        <fullName>Coagulation factor II</fullName>
    </alternativeName>
    <component>
        <recommendedName>
            <fullName>Activation peptide fragment 1</fullName>
        </recommendedName>
    </component>
    <component>
        <recommendedName>
            <fullName>Activation peptide fragment 2</fullName>
        </recommendedName>
    </component>
    <component>
        <recommendedName>
            <fullName>Thrombin light chain</fullName>
        </recommendedName>
    </component>
    <component>
        <recommendedName>
            <fullName>Thrombin heavy chain</fullName>
        </recommendedName>
    </component>
</protein>
<reference key="1">
    <citation type="submission" date="2004-11" db="EMBL/GenBank/DDBJ databases">
        <authorList>
            <consortium name="The German cDNA consortium"/>
        </authorList>
    </citation>
    <scope>NUCLEOTIDE SEQUENCE [LARGE SCALE MRNA]</scope>
    <source>
        <tissue>Liver</tissue>
    </source>
</reference>
<name>THRB_PONAB</name>
<feature type="signal peptide" evidence="4">
    <location>
        <begin position="1"/>
        <end position="24"/>
    </location>
</feature>
<feature type="propeptide" id="PRO_0000028171" evidence="1">
    <location>
        <begin position="25"/>
        <end position="43"/>
    </location>
</feature>
<feature type="chain" id="PRO_0000028172" description="Prothrombin">
    <location>
        <begin position="44"/>
        <end position="623"/>
    </location>
</feature>
<feature type="peptide" id="PRO_0000028173" description="Activation peptide fragment 1" evidence="1">
    <location>
        <begin position="44"/>
        <end position="199"/>
    </location>
</feature>
<feature type="peptide" id="PRO_0000028174" description="Activation peptide fragment 2" evidence="1">
    <location>
        <begin position="200"/>
        <end position="328"/>
    </location>
</feature>
<feature type="chain" id="PRO_0000028175" description="Thrombin light chain" evidence="1">
    <location>
        <begin position="316"/>
        <end position="364"/>
    </location>
</feature>
<feature type="chain" id="PRO_0000028176" description="Thrombin heavy chain" evidence="1">
    <location>
        <begin position="365"/>
        <end position="622"/>
    </location>
</feature>
<feature type="domain" description="Gla" evidence="7">
    <location>
        <begin position="44"/>
        <end position="90"/>
    </location>
</feature>
<feature type="domain" description="Kringle 1" evidence="5">
    <location>
        <begin position="108"/>
        <end position="187"/>
    </location>
</feature>
<feature type="domain" description="Kringle 2" evidence="5">
    <location>
        <begin position="213"/>
        <end position="292"/>
    </location>
</feature>
<feature type="domain" description="Peptidase S1" evidence="6">
    <location>
        <begin position="365"/>
        <end position="619"/>
    </location>
</feature>
<feature type="region of interest" description="High affinity receptor-binding region which also known as the TP508 peptide" evidence="1">
    <location>
        <begin position="552"/>
        <end position="574"/>
    </location>
</feature>
<feature type="active site" description="Charge relay system" evidence="1">
    <location>
        <position position="407"/>
    </location>
</feature>
<feature type="active site" description="Charge relay system" evidence="1">
    <location>
        <position position="463"/>
    </location>
</feature>
<feature type="active site" description="Charge relay system" evidence="1">
    <location>
        <position position="569"/>
    </location>
</feature>
<feature type="site" description="Cleavage; by thrombin" evidence="1">
    <location>
        <begin position="199"/>
        <end position="200"/>
    </location>
</feature>
<feature type="site" description="Cleavage; by factor Xa" evidence="2">
    <location>
        <begin position="315"/>
        <end position="316"/>
    </location>
</feature>
<feature type="site" description="Cleavage; by factor Xa" evidence="2">
    <location>
        <begin position="364"/>
        <end position="365"/>
    </location>
</feature>
<feature type="modified residue" description="4-carboxyglutamate" evidence="3 7">
    <location>
        <position position="50"/>
    </location>
</feature>
<feature type="modified residue" description="4-carboxyglutamate" evidence="3 7">
    <location>
        <position position="51"/>
    </location>
</feature>
<feature type="modified residue" description="4-carboxyglutamate" evidence="3 7">
    <location>
        <position position="58"/>
    </location>
</feature>
<feature type="modified residue" description="4-carboxyglutamate" evidence="3 7">
    <location>
        <position position="60"/>
    </location>
</feature>
<feature type="modified residue" description="4-carboxyglutamate" evidence="3 7">
    <location>
        <position position="63"/>
    </location>
</feature>
<feature type="modified residue" description="4-carboxyglutamate" evidence="3 7">
    <location>
        <position position="64"/>
    </location>
</feature>
<feature type="modified residue" description="4-carboxyglutamate" evidence="3 7">
    <location>
        <position position="69"/>
    </location>
</feature>
<feature type="modified residue" description="4-carboxyglutamate" evidence="3 7">
    <location>
        <position position="70"/>
    </location>
</feature>
<feature type="modified residue" description="4-carboxyglutamate" evidence="3 7">
    <location>
        <position position="73"/>
    </location>
</feature>
<feature type="modified residue" description="4-carboxyglutamate" evidence="3 7">
    <location>
        <position position="76"/>
    </location>
</feature>
<feature type="glycosylation site" description="N-linked (GlcNAc...) asparagine" evidence="4">
    <location>
        <position position="122"/>
    </location>
</feature>
<feature type="glycosylation site" description="N-linked (GlcNAc...) asparagine" evidence="4">
    <location>
        <position position="144"/>
    </location>
</feature>
<feature type="glycosylation site" description="N-linked (GlcNAc...) asparagine" evidence="4">
    <location>
        <position position="417"/>
    </location>
</feature>
<feature type="disulfide bond" evidence="1">
    <location>
        <begin position="61"/>
        <end position="66"/>
    </location>
</feature>
<feature type="disulfide bond" evidence="1">
    <location>
        <begin position="91"/>
        <end position="104"/>
    </location>
</feature>
<feature type="disulfide bond" evidence="1">
    <location>
        <begin position="109"/>
        <end position="187"/>
    </location>
</feature>
<feature type="disulfide bond" evidence="1">
    <location>
        <begin position="130"/>
        <end position="170"/>
    </location>
</feature>
<feature type="disulfide bond" evidence="1">
    <location>
        <begin position="158"/>
        <end position="182"/>
    </location>
</feature>
<feature type="disulfide bond" evidence="1">
    <location>
        <begin position="214"/>
        <end position="292"/>
    </location>
</feature>
<feature type="disulfide bond" evidence="1">
    <location>
        <begin position="235"/>
        <end position="275"/>
    </location>
</feature>
<feature type="disulfide bond" evidence="1">
    <location>
        <begin position="263"/>
        <end position="287"/>
    </location>
</feature>
<feature type="disulfide bond" description="Interchain (between light and heavy chains)" evidence="5 6 7">
    <location>
        <begin position="337"/>
        <end position="483"/>
    </location>
</feature>
<feature type="disulfide bond" evidence="1">
    <location>
        <begin position="392"/>
        <end position="408"/>
    </location>
</feature>
<feature type="disulfide bond" evidence="1">
    <location>
        <begin position="537"/>
        <end position="551"/>
    </location>
</feature>
<feature type="disulfide bond" evidence="1">
    <location>
        <begin position="565"/>
        <end position="595"/>
    </location>
</feature>
<gene>
    <name type="primary">F2</name>
</gene>
<keyword id="KW-0011">Acute phase</keyword>
<keyword id="KW-0094">Blood coagulation</keyword>
<keyword id="KW-0106">Calcium</keyword>
<keyword id="KW-0165">Cleavage on pair of basic residues</keyword>
<keyword id="KW-1015">Disulfide bond</keyword>
<keyword id="KW-0301">Gamma-carboxyglutamic acid</keyword>
<keyword id="KW-0325">Glycoprotein</keyword>
<keyword id="KW-0356">Hemostasis</keyword>
<keyword id="KW-0378">Hydrolase</keyword>
<keyword id="KW-0420">Kringle</keyword>
<keyword id="KW-0645">Protease</keyword>
<keyword id="KW-1185">Reference proteome</keyword>
<keyword id="KW-0677">Repeat</keyword>
<keyword id="KW-0720">Serine protease</keyword>
<keyword id="KW-0732">Signal</keyword>
<keyword id="KW-0865">Zymogen</keyword>
<accession>Q5R537</accession>
<comment type="function">
    <text evidence="1 2">Thrombin, which cleaves bonds after Arg and Lys, converts fibrinogen to fibrin and activates factors V, VII, VIII, XIII, and, in complex with thrombomodulin, protein C. Functions in blood homeostasis, inflammation and wound healing (By similarity). Activates coagulation factor XI (F11); activation is promoted by the contact with negatively charged surfaces (By similarity). Triggers the production of pro-inflammatory cytokines, such as MCP-1/CCL2 and IL8/CXCL8, in endothelial cells (By similarity).</text>
</comment>
<comment type="catalytic activity">
    <reaction>
        <text>Selective cleavage of Arg-|-Gly bonds in fibrinogen to form fibrin and release fibrinopeptides A and B.</text>
        <dbReference type="EC" id="3.4.21.5"/>
    </reaction>
</comment>
<comment type="activity regulation">
    <text evidence="2">Activity is promoted in the presence of negatively charged surfaces, such as polyphosphate and dextran sulfate (By similarity). Inhibited by SERPINA5 (By similarity).</text>
</comment>
<comment type="subunit">
    <text evidence="2">Heterodimer (named alpha-thrombin) of a light and a heavy chain; disulfide-linked. Forms a heterodimer with SERPINA5. In plasma, interacts (via N-terminus) with alpha-1-microglobulin; this interaction does not prevent the activation of prothrombin to thrombin.</text>
</comment>
<comment type="PTM">
    <text evidence="1">The gamma-carboxyglutamyl residues, which bind calcium ions, result from the carboxylation of glutamyl residues by a microsomal enzyme, the vitamin K-dependent carboxylase. The modified residues are necessary for the calcium-dependent interaction with a negatively charged phospholipid surface, which is essential for the conversion of prothrombin to thrombin (By similarity).</text>
</comment>
<comment type="PTM">
    <text evidence="2">In the penultimate step of the coagulation cascade, prothrombin is converted to thrombin by the prothrombinase complex composed of factor Xa (F10), cofactor Va (F5), and phospholipids. This activation requires factor Xa-catalyzed sequential cleavage at 2 sites, Arg-315 and Arg-364, along 2 possible pathways. In the first pathway, the first cleavage occurs at Arg-315, leading to the formation of the inactive intermediate prethrombin-2. This pathway preferentially occurs on platelets and in the absence of cofactor Va. In the second pathway, the first cleavage occurs at Arg-364, which separates protease domain into 2 chains that remain connected through a disulfide bond and generates the active intermediate meizothrombin. The presence of cofactor Va directs activation along the meizothrombin pathway and greatly accelerates the rate of cleavage at Arg-364, but has a smaller effect on the cleavage of meizothrombin at Arg-315. Meizothrombin accumulates as an intermediate when prothrombinase is assembled on the membrane of red blood cells.</text>
</comment>
<comment type="miscellaneous">
    <text evidence="1">Thrombin can itself cleave the N-terminal fragment (fragment 1) of the prothrombin, prior to its activation by factor Xa.</text>
</comment>
<comment type="similarity">
    <text evidence="6">Belongs to the peptidase S1 family.</text>
</comment>
<dbReference type="EC" id="3.4.21.5"/>
<dbReference type="EMBL" id="CR861038">
    <property type="protein sequence ID" value="CAH93129.1"/>
    <property type="molecule type" value="mRNA"/>
</dbReference>
<dbReference type="RefSeq" id="NP_001126851.1">
    <property type="nucleotide sequence ID" value="NM_001133379.1"/>
</dbReference>
<dbReference type="SMR" id="Q5R537"/>
<dbReference type="FunCoup" id="Q5R537">
    <property type="interactions" value="728"/>
</dbReference>
<dbReference type="STRING" id="9601.ENSPPYP00000003807"/>
<dbReference type="MEROPS" id="S01.217"/>
<dbReference type="GlyCosmos" id="Q5R537">
    <property type="glycosylation" value="3 sites, No reported glycans"/>
</dbReference>
<dbReference type="GeneID" id="100173859"/>
<dbReference type="KEGG" id="pon:100173859"/>
<dbReference type="CTD" id="2147"/>
<dbReference type="eggNOG" id="ENOG502QTSX">
    <property type="taxonomic scope" value="Eukaryota"/>
</dbReference>
<dbReference type="InParanoid" id="Q5R537"/>
<dbReference type="OrthoDB" id="6380398at2759"/>
<dbReference type="Proteomes" id="UP000001595">
    <property type="component" value="Unplaced"/>
</dbReference>
<dbReference type="GO" id="GO:0005615">
    <property type="term" value="C:extracellular space"/>
    <property type="evidence" value="ECO:0007669"/>
    <property type="project" value="TreeGrafter"/>
</dbReference>
<dbReference type="GO" id="GO:0005509">
    <property type="term" value="F:calcium ion binding"/>
    <property type="evidence" value="ECO:0007669"/>
    <property type="project" value="InterPro"/>
</dbReference>
<dbReference type="GO" id="GO:0004252">
    <property type="term" value="F:serine-type endopeptidase activity"/>
    <property type="evidence" value="ECO:0007669"/>
    <property type="project" value="UniProtKB-EC"/>
</dbReference>
<dbReference type="GO" id="GO:0006953">
    <property type="term" value="P:acute-phase response"/>
    <property type="evidence" value="ECO:0007669"/>
    <property type="project" value="UniProtKB-KW"/>
</dbReference>
<dbReference type="GO" id="GO:0030168">
    <property type="term" value="P:platelet activation"/>
    <property type="evidence" value="ECO:0007669"/>
    <property type="project" value="TreeGrafter"/>
</dbReference>
<dbReference type="GO" id="GO:0030194">
    <property type="term" value="P:positive regulation of blood coagulation"/>
    <property type="evidence" value="ECO:0007669"/>
    <property type="project" value="TreeGrafter"/>
</dbReference>
<dbReference type="GO" id="GO:0006508">
    <property type="term" value="P:proteolysis"/>
    <property type="evidence" value="ECO:0007669"/>
    <property type="project" value="UniProtKB-KW"/>
</dbReference>
<dbReference type="CDD" id="cd00108">
    <property type="entry name" value="KR"/>
    <property type="match status" value="2"/>
</dbReference>
<dbReference type="CDD" id="cd00190">
    <property type="entry name" value="Tryp_SPc"/>
    <property type="match status" value="1"/>
</dbReference>
<dbReference type="FunFam" id="2.40.10.10:FF:000085">
    <property type="entry name" value="Prothrombin"/>
    <property type="match status" value="1"/>
</dbReference>
<dbReference type="FunFam" id="2.40.20.10:FF:000015">
    <property type="entry name" value="Prothrombin"/>
    <property type="match status" value="1"/>
</dbReference>
<dbReference type="FunFam" id="2.40.20.10:FF:000017">
    <property type="entry name" value="Prothrombin"/>
    <property type="match status" value="1"/>
</dbReference>
<dbReference type="FunFam" id="4.10.140.10:FF:000001">
    <property type="entry name" value="Prothrombin"/>
    <property type="match status" value="1"/>
</dbReference>
<dbReference type="FunFam" id="2.40.10.10:FF:000068">
    <property type="entry name" value="transmembrane protease serine 2"/>
    <property type="match status" value="1"/>
</dbReference>
<dbReference type="Gene3D" id="2.40.20.10">
    <property type="entry name" value="Plasminogen Kringle 4"/>
    <property type="match status" value="2"/>
</dbReference>
<dbReference type="Gene3D" id="4.10.140.10">
    <property type="entry name" value="Thrombin light chain domain"/>
    <property type="match status" value="1"/>
</dbReference>
<dbReference type="Gene3D" id="2.40.10.10">
    <property type="entry name" value="Trypsin-like serine proteases"/>
    <property type="match status" value="2"/>
</dbReference>
<dbReference type="InterPro" id="IPR035972">
    <property type="entry name" value="GLA-like_dom_SF"/>
</dbReference>
<dbReference type="InterPro" id="IPR000294">
    <property type="entry name" value="GLA_domain"/>
</dbReference>
<dbReference type="InterPro" id="IPR000001">
    <property type="entry name" value="Kringle"/>
</dbReference>
<dbReference type="InterPro" id="IPR013806">
    <property type="entry name" value="Kringle-like"/>
</dbReference>
<dbReference type="InterPro" id="IPR018056">
    <property type="entry name" value="Kringle_CS"/>
</dbReference>
<dbReference type="InterPro" id="IPR038178">
    <property type="entry name" value="Kringle_sf"/>
</dbReference>
<dbReference type="InterPro" id="IPR009003">
    <property type="entry name" value="Peptidase_S1_PA"/>
</dbReference>
<dbReference type="InterPro" id="IPR043504">
    <property type="entry name" value="Peptidase_S1_PA_chymotrypsin"/>
</dbReference>
<dbReference type="InterPro" id="IPR001314">
    <property type="entry name" value="Peptidase_S1A"/>
</dbReference>
<dbReference type="InterPro" id="IPR003966">
    <property type="entry name" value="Prothrombin/thrombin"/>
</dbReference>
<dbReference type="InterPro" id="IPR051659">
    <property type="entry name" value="Serine_Protease_S1-Domain"/>
</dbReference>
<dbReference type="InterPro" id="IPR018992">
    <property type="entry name" value="Thrombin_light_chain"/>
</dbReference>
<dbReference type="InterPro" id="IPR037111">
    <property type="entry name" value="Thrombin_light_chain_sf"/>
</dbReference>
<dbReference type="InterPro" id="IPR001254">
    <property type="entry name" value="Trypsin_dom"/>
</dbReference>
<dbReference type="InterPro" id="IPR018114">
    <property type="entry name" value="TRYPSIN_HIS"/>
</dbReference>
<dbReference type="InterPro" id="IPR033116">
    <property type="entry name" value="TRYPSIN_SER"/>
</dbReference>
<dbReference type="PANTHER" id="PTHR24254">
    <property type="entry name" value="PROTHROMBIN"/>
    <property type="match status" value="1"/>
</dbReference>
<dbReference type="PANTHER" id="PTHR24254:SF10">
    <property type="entry name" value="PROTHROMBIN"/>
    <property type="match status" value="1"/>
</dbReference>
<dbReference type="Pfam" id="PF00594">
    <property type="entry name" value="Gla"/>
    <property type="match status" value="1"/>
</dbReference>
<dbReference type="Pfam" id="PF00051">
    <property type="entry name" value="Kringle"/>
    <property type="match status" value="2"/>
</dbReference>
<dbReference type="Pfam" id="PF09396">
    <property type="entry name" value="Thrombin_light"/>
    <property type="match status" value="1"/>
</dbReference>
<dbReference type="Pfam" id="PF00089">
    <property type="entry name" value="Trypsin"/>
    <property type="match status" value="1"/>
</dbReference>
<dbReference type="PIRSF" id="PIRSF001149">
    <property type="entry name" value="Thrombin"/>
    <property type="match status" value="1"/>
</dbReference>
<dbReference type="PRINTS" id="PR00722">
    <property type="entry name" value="CHYMOTRYPSIN"/>
</dbReference>
<dbReference type="PRINTS" id="PR00001">
    <property type="entry name" value="GLABLOOD"/>
</dbReference>
<dbReference type="PRINTS" id="PR00018">
    <property type="entry name" value="KRINGLE"/>
</dbReference>
<dbReference type="PRINTS" id="PR01505">
    <property type="entry name" value="PROTHROMBIN"/>
</dbReference>
<dbReference type="SMART" id="SM00069">
    <property type="entry name" value="GLA"/>
    <property type="match status" value="1"/>
</dbReference>
<dbReference type="SMART" id="SM00130">
    <property type="entry name" value="KR"/>
    <property type="match status" value="2"/>
</dbReference>
<dbReference type="SMART" id="SM00020">
    <property type="entry name" value="Tryp_SPc"/>
    <property type="match status" value="1"/>
</dbReference>
<dbReference type="SUPFAM" id="SSF57630">
    <property type="entry name" value="GLA-domain"/>
    <property type="match status" value="1"/>
</dbReference>
<dbReference type="SUPFAM" id="SSF57440">
    <property type="entry name" value="Kringle-like"/>
    <property type="match status" value="2"/>
</dbReference>
<dbReference type="SUPFAM" id="SSF50494">
    <property type="entry name" value="Trypsin-like serine proteases"/>
    <property type="match status" value="1"/>
</dbReference>
<dbReference type="PROSITE" id="PS00011">
    <property type="entry name" value="GLA_1"/>
    <property type="match status" value="1"/>
</dbReference>
<dbReference type="PROSITE" id="PS50998">
    <property type="entry name" value="GLA_2"/>
    <property type="match status" value="1"/>
</dbReference>
<dbReference type="PROSITE" id="PS00021">
    <property type="entry name" value="KRINGLE_1"/>
    <property type="match status" value="2"/>
</dbReference>
<dbReference type="PROSITE" id="PS50070">
    <property type="entry name" value="KRINGLE_2"/>
    <property type="match status" value="2"/>
</dbReference>
<dbReference type="PROSITE" id="PS50240">
    <property type="entry name" value="TRYPSIN_DOM"/>
    <property type="match status" value="1"/>
</dbReference>
<dbReference type="PROSITE" id="PS00134">
    <property type="entry name" value="TRYPSIN_HIS"/>
    <property type="match status" value="1"/>
</dbReference>
<dbReference type="PROSITE" id="PS00135">
    <property type="entry name" value="TRYPSIN_SER"/>
    <property type="match status" value="1"/>
</dbReference>
<sequence>MAHVRGLQLPGCLALAALCTLVHSQHVFLAPQQALSLLQRVRRANSVFLEEVRKGNLERECVEETCSYEEAFEALESSTATDVFWAKYTACETARTPRDKLAACLEGNCAEGLGTNYRGHLNITQSGIQCQLWRSRYPHKPEINSTTHPGADLQENFCRNPDSSTTGPWCYTTDPTVRRQECSIPVCGQDQVTVAMTPRSEGSGVNLSPPSEQCVPDRGQQYQGRLAVTTHGLPCLAWASAQAKALSKHQDFNSAVQLVENFCRNPDGDEEGVWCYVAGKPGDFGYCDLNYCEEAMEEETGGGLDEDPDRAIEGRTATSEYQTFFDPRTFGSGEADCGLRPLFEKKSLEDKTERELLESYIDGRIVEGSDAEIGMSPWQVMLFRKSPQELLCGATLISDRWVLTAAHCLLYPPWDKNFTENDLLVRIGKHSRTRYERNIEKISMLEKIYIHPRYNWRENLDRDIALMKLKKPVAFSDYIHPVCLPDRETAASLLQAGYKGRVTGWGNLKETWTANVGKVQPSVLQVVNLPIVERPVCKDSTRIRITDNMFCAGYKPDEGKRGDACEGDSGGPFVMKSPFNNCWYQMGIVSWGEGCDRDGKYGFYTHVFRLKKWIQKVIDQFGE</sequence>
<evidence type="ECO:0000250" key="1"/>
<evidence type="ECO:0000250" key="2">
    <source>
        <dbReference type="UniProtKB" id="P00734"/>
    </source>
</evidence>
<evidence type="ECO:0000250" key="3">
    <source>
        <dbReference type="UniProtKB" id="P00735"/>
    </source>
</evidence>
<evidence type="ECO:0000255" key="4"/>
<evidence type="ECO:0000255" key="5">
    <source>
        <dbReference type="PROSITE-ProRule" id="PRU00121"/>
    </source>
</evidence>
<evidence type="ECO:0000255" key="6">
    <source>
        <dbReference type="PROSITE-ProRule" id="PRU00274"/>
    </source>
</evidence>
<evidence type="ECO:0000255" key="7">
    <source>
        <dbReference type="PROSITE-ProRule" id="PRU00463"/>
    </source>
</evidence>
<proteinExistence type="evidence at transcript level"/>